<reference key="1">
    <citation type="journal article" date="1997" name="Science">
        <title>The complete genome sequence of Escherichia coli K-12.</title>
        <authorList>
            <person name="Blattner F.R."/>
            <person name="Plunkett G. III"/>
            <person name="Bloch C.A."/>
            <person name="Perna N.T."/>
            <person name="Burland V."/>
            <person name="Riley M."/>
            <person name="Collado-Vides J."/>
            <person name="Glasner J.D."/>
            <person name="Rode C.K."/>
            <person name="Mayhew G.F."/>
            <person name="Gregor J."/>
            <person name="Davis N.W."/>
            <person name="Kirkpatrick H.A."/>
            <person name="Goeden M.A."/>
            <person name="Rose D.J."/>
            <person name="Mau B."/>
            <person name="Shao Y."/>
        </authorList>
    </citation>
    <scope>NUCLEOTIDE SEQUENCE [LARGE SCALE GENOMIC DNA]</scope>
    <source>
        <strain>K12 / MG1655 / ATCC 47076</strain>
    </source>
</reference>
<reference key="2">
    <citation type="journal article" date="2006" name="Mol. Syst. Biol.">
        <title>Highly accurate genome sequences of Escherichia coli K-12 strains MG1655 and W3110.</title>
        <authorList>
            <person name="Hayashi K."/>
            <person name="Morooka N."/>
            <person name="Yamamoto Y."/>
            <person name="Fujita K."/>
            <person name="Isono K."/>
            <person name="Choi S."/>
            <person name="Ohtsubo E."/>
            <person name="Baba T."/>
            <person name="Wanner B.L."/>
            <person name="Mori H."/>
            <person name="Horiuchi T."/>
        </authorList>
    </citation>
    <scope>NUCLEOTIDE SEQUENCE [LARGE SCALE GENOMIC DNA]</scope>
    <source>
        <strain>K12 / W3110 / ATCC 27325 / DSM 5911</strain>
    </source>
</reference>
<reference key="3">
    <citation type="journal article" date="2007" name="J. Bacteriol.">
        <title>Genome-wide screening of genes required for swarming motility in Escherichia coli K-12.</title>
        <authorList>
            <person name="Inoue T."/>
            <person name="Shingaki R."/>
            <person name="Hirose S."/>
            <person name="Waki K."/>
            <person name="Mori H."/>
            <person name="Fukui K."/>
        </authorList>
    </citation>
    <scope>DISRUPTION PHENOTYPE</scope>
    <source>
        <strain>K12 / BW25113</strain>
    </source>
</reference>
<reference key="4">
    <citation type="journal article" date="2015" name="Toxins">
        <title>Orphan toxin OrtT (YdcX) of Escherichia coli reduces growth during the stringent response.</title>
        <authorList>
            <person name="Islam S."/>
            <person name="Benedik M.J."/>
            <person name="Wood T.K."/>
        </authorList>
    </citation>
    <scope>FUNCTION</scope>
    <scope>LACK OF ANTITOXIN</scope>
    <scope>SUBCELLULAR LOCATION</scope>
    <scope>INDUCTION BY STRESS</scope>
    <scope>DISRUPTION PHENOTYPE</scope>
    <scope>MUTAGENESIS OF MET-1 AND PHE-38</scope>
    <source>
        <strain>K12 / BW25113</strain>
    </source>
</reference>
<gene>
    <name evidence="4" type="primary">ortT</name>
    <name type="synonym">ydcX</name>
    <name type="ordered locus">b1445</name>
    <name type="ordered locus">JW5232</name>
</gene>
<proteinExistence type="evidence at protein level"/>
<sequence length="57" mass="6646">MSLYQHMLVFYAVMAAIAFLITWFLSHDKKRIRFLSAFLVGATWPMSFPVALLFSLF</sequence>
<name>ORTT_ECOLI</name>
<dbReference type="EMBL" id="U00096">
    <property type="protein sequence ID" value="AAC74527.2"/>
    <property type="molecule type" value="Genomic_DNA"/>
</dbReference>
<dbReference type="EMBL" id="AP009048">
    <property type="protein sequence ID" value="BAE76441.1"/>
    <property type="molecule type" value="Genomic_DNA"/>
</dbReference>
<dbReference type="PIR" id="H64896">
    <property type="entry name" value="H64896"/>
</dbReference>
<dbReference type="RefSeq" id="NP_415962.2">
    <property type="nucleotide sequence ID" value="NC_000913.3"/>
</dbReference>
<dbReference type="RefSeq" id="WP_000061178.1">
    <property type="nucleotide sequence ID" value="NZ_STEB01000043.1"/>
</dbReference>
<dbReference type="SMR" id="P64453"/>
<dbReference type="BioGRID" id="4262895">
    <property type="interactions" value="100"/>
</dbReference>
<dbReference type="FunCoup" id="P64453">
    <property type="interactions" value="23"/>
</dbReference>
<dbReference type="STRING" id="511145.b1445"/>
<dbReference type="TCDB" id="1.C.130.1.1">
    <property type="family name" value="the membrane potential-dissipating orphan 10 toxin, (ortt) family"/>
</dbReference>
<dbReference type="PaxDb" id="511145-b1445"/>
<dbReference type="EnsemblBacteria" id="AAC74527">
    <property type="protein sequence ID" value="AAC74527"/>
    <property type="gene ID" value="b1445"/>
</dbReference>
<dbReference type="GeneID" id="93775593"/>
<dbReference type="GeneID" id="945936"/>
<dbReference type="KEGG" id="ecj:JW5232"/>
<dbReference type="KEGG" id="eco:b1445"/>
<dbReference type="KEGG" id="ecoc:C3026_08410"/>
<dbReference type="PATRIC" id="fig|511145.12.peg.1511"/>
<dbReference type="EchoBASE" id="EB3530"/>
<dbReference type="HOGENOM" id="CLU_189012_0_0_6"/>
<dbReference type="InParanoid" id="P64453"/>
<dbReference type="OMA" id="MSLYQKM"/>
<dbReference type="OrthoDB" id="6413705at2"/>
<dbReference type="PhylomeDB" id="P64453"/>
<dbReference type="BioCyc" id="EcoCyc:G6756-MONOMER"/>
<dbReference type="PRO" id="PR:P64453"/>
<dbReference type="Proteomes" id="UP000000625">
    <property type="component" value="Chromosome"/>
</dbReference>
<dbReference type="GO" id="GO:0005886">
    <property type="term" value="C:plasma membrane"/>
    <property type="evidence" value="ECO:0000304"/>
    <property type="project" value="EcoCyc"/>
</dbReference>
<dbReference type="GO" id="GO:0001896">
    <property type="term" value="P:autolysis"/>
    <property type="evidence" value="ECO:0000314"/>
    <property type="project" value="EcoCyc"/>
</dbReference>
<dbReference type="InterPro" id="IPR019689">
    <property type="entry name" value="Toxin_GhoT/OrtT"/>
</dbReference>
<dbReference type="Pfam" id="PF10753">
    <property type="entry name" value="Toxin_GhoT_OrtT"/>
    <property type="match status" value="1"/>
</dbReference>
<evidence type="ECO:0000255" key="1"/>
<evidence type="ECO:0000269" key="2">
    <source>
    </source>
</evidence>
<evidence type="ECO:0000269" key="3">
    <source>
    </source>
</evidence>
<evidence type="ECO:0000303" key="4">
    <source>
    </source>
</evidence>
<evidence type="ECO:0000305" key="5"/>
<evidence type="ECO:0000305" key="6">
    <source>
    </source>
</evidence>
<organism>
    <name type="scientific">Escherichia coli (strain K12)</name>
    <dbReference type="NCBI Taxonomy" id="83333"/>
    <lineage>
        <taxon>Bacteria</taxon>
        <taxon>Pseudomonadati</taxon>
        <taxon>Pseudomonadota</taxon>
        <taxon>Gammaproteobacteria</taxon>
        <taxon>Enterobacterales</taxon>
        <taxon>Enterobacteriaceae</taxon>
        <taxon>Escherichia</taxon>
    </lineage>
</organism>
<protein>
    <recommendedName>
        <fullName evidence="4">Orphan toxin OrtT</fullName>
    </recommendedName>
</protein>
<keyword id="KW-0997">Cell inner membrane</keyword>
<keyword id="KW-1003">Cell membrane</keyword>
<keyword id="KW-0472">Membrane</keyword>
<keyword id="KW-1185">Reference proteome</keyword>
<keyword id="KW-0346">Stress response</keyword>
<keyword id="KW-0812">Transmembrane</keyword>
<keyword id="KW-1133">Transmembrane helix</keyword>
<accession>P64453</accession>
<accession>P76109</accession>
<accession>Q2MBB5</accession>
<feature type="chain" id="PRO_0000168933" description="Orphan toxin OrtT">
    <location>
        <begin position="1"/>
        <end position="57"/>
    </location>
</feature>
<feature type="transmembrane region" description="Helical" evidence="1">
    <location>
        <begin position="6"/>
        <end position="26"/>
    </location>
</feature>
<feature type="transmembrane region" description="Helical" evidence="1">
    <location>
        <begin position="34"/>
        <end position="54"/>
    </location>
</feature>
<feature type="mutagenesis site" description="Not toxic as no protein is produced." evidence="3">
    <original>M</original>
    <variation>T</variation>
    <location>
        <position position="1"/>
    </location>
</feature>
<feature type="mutagenesis site" description="Reduced toxicity." evidence="3">
    <original>F</original>
    <variation>R</variation>
    <location>
        <position position="38"/>
    </location>
</feature>
<comment type="function">
    <text evidence="3">Acts as an orphan toxin which is important for maintaining cell fitness during stress related to the stringent response (decreased amino acid, purine and thymidine availability). Overexpression inhibits cell growth and increases the formation of persister cells. Causes 99.9% of cells to undergo bacterial lysis within 2 hours after induction; nucleoids condense, the cytoplasm seems empty and the periplasmic space enlarges. The intracellular ATP level decreases about 27-fold suggesting the membrane potential may be disrupted.</text>
</comment>
<comment type="subcellular location">
    <subcellularLocation>
        <location evidence="6">Cell inner membrane</location>
        <topology evidence="5">Multi-pass membrane protein</topology>
    </subcellularLocation>
</comment>
<comment type="induction">
    <text evidence="3">By conditions that induce the stringent response such as increased expression of RelA, heat shock at 43 degrees Celsius, probably under control of sigma factor E and/or H (rpoE, rpoH), or growth in the presence of trimethoprim (TMP), mupirocin or serine hydroxamate.</text>
</comment>
<comment type="disruption phenotype">
    <text evidence="2 3">Strongly represses cell swarming but no effect on cell swimming (PubMed:17122336). Increased metabolic activity in the presence of TMP, an inhibitor of dihydrofolate reductase (folA) and sulfamethoxazole, an inhibitor of dihydropteroate synthetase (folC). Cells grow faster than wild-type in the presence of TMP.</text>
</comment>
<comment type="miscellaneous">
    <text evidence="3">Although this protein has high homology to GhoT, the toxic component of a type IV toxin-antitoxin system, no antitoxin has been found. GhoS (the antitoxin for GhoT), YdcY (the neighboring gene), 5'- and 3'-UTRs as well as approximately 620 bp lengths of the BW25113 genome DNA were tested.</text>
</comment>
<comment type="similarity">
    <text evidence="5">Belongs to the GhoT/OrtT toxin family.</text>
</comment>